<comment type="subunit">
    <text evidence="1">Part of a tripartite efflux system composed of MdtA, MdtB and MdtC. MdtC forms a heteromultimer with MdtB.</text>
</comment>
<comment type="subcellular location">
    <subcellularLocation>
        <location evidence="1">Cell inner membrane</location>
        <topology evidence="1">Multi-pass membrane protein</topology>
    </subcellularLocation>
</comment>
<comment type="similarity">
    <text evidence="1">Belongs to the resistance-nodulation-cell division (RND) (TC 2.A.6) family. MdtC subfamily.</text>
</comment>
<dbReference type="EMBL" id="CP000826">
    <property type="protein sequence ID" value="ABV42650.1"/>
    <property type="molecule type" value="Genomic_DNA"/>
</dbReference>
<dbReference type="SMR" id="A8GHR0"/>
<dbReference type="STRING" id="399741.Spro_3554"/>
<dbReference type="KEGG" id="spe:Spro_3554"/>
<dbReference type="eggNOG" id="COG0841">
    <property type="taxonomic scope" value="Bacteria"/>
</dbReference>
<dbReference type="HOGENOM" id="CLU_002755_1_2_6"/>
<dbReference type="OrthoDB" id="9757904at2"/>
<dbReference type="GO" id="GO:0005886">
    <property type="term" value="C:plasma membrane"/>
    <property type="evidence" value="ECO:0007669"/>
    <property type="project" value="UniProtKB-SubCell"/>
</dbReference>
<dbReference type="GO" id="GO:0042910">
    <property type="term" value="F:xenobiotic transmembrane transporter activity"/>
    <property type="evidence" value="ECO:0007669"/>
    <property type="project" value="TreeGrafter"/>
</dbReference>
<dbReference type="FunFam" id="1.20.1640.10:FF:000001">
    <property type="entry name" value="Efflux pump membrane transporter"/>
    <property type="match status" value="1"/>
</dbReference>
<dbReference type="FunFam" id="3.30.70.1430:FF:000001">
    <property type="entry name" value="Efflux pump membrane transporter"/>
    <property type="match status" value="1"/>
</dbReference>
<dbReference type="FunFam" id="3.30.2090.10:FF:000004">
    <property type="entry name" value="Multidrug resistance protein MdtC"/>
    <property type="match status" value="1"/>
</dbReference>
<dbReference type="Gene3D" id="3.30.70.1430">
    <property type="entry name" value="Multidrug efflux transporter AcrB pore domain"/>
    <property type="match status" value="2"/>
</dbReference>
<dbReference type="Gene3D" id="3.30.70.1440">
    <property type="entry name" value="Multidrug efflux transporter AcrB pore domain"/>
    <property type="match status" value="1"/>
</dbReference>
<dbReference type="Gene3D" id="3.30.70.1320">
    <property type="entry name" value="Multidrug efflux transporter AcrB pore domain like"/>
    <property type="match status" value="1"/>
</dbReference>
<dbReference type="Gene3D" id="3.30.2090.10">
    <property type="entry name" value="Multidrug efflux transporter AcrB TolC docking domain, DN and DC subdomains"/>
    <property type="match status" value="2"/>
</dbReference>
<dbReference type="Gene3D" id="1.20.1640.10">
    <property type="entry name" value="Multidrug efflux transporter AcrB transmembrane domain"/>
    <property type="match status" value="2"/>
</dbReference>
<dbReference type="HAMAP" id="MF_01424">
    <property type="entry name" value="MdtC"/>
    <property type="match status" value="1"/>
</dbReference>
<dbReference type="InterPro" id="IPR027463">
    <property type="entry name" value="AcrB_DN_DC_subdom"/>
</dbReference>
<dbReference type="InterPro" id="IPR001036">
    <property type="entry name" value="Acrflvin-R"/>
</dbReference>
<dbReference type="InterPro" id="IPR023931">
    <property type="entry name" value="Multidrug-R_MdtC"/>
</dbReference>
<dbReference type="NCBIfam" id="NF007905">
    <property type="entry name" value="PRK10614.1"/>
    <property type="match status" value="1"/>
</dbReference>
<dbReference type="NCBIfam" id="NF033617">
    <property type="entry name" value="RND_permease_2"/>
    <property type="match status" value="1"/>
</dbReference>
<dbReference type="PANTHER" id="PTHR32063">
    <property type="match status" value="1"/>
</dbReference>
<dbReference type="PANTHER" id="PTHR32063:SF34">
    <property type="entry name" value="MULTIDRUG RESISTANCE PROTEIN MDTC"/>
    <property type="match status" value="1"/>
</dbReference>
<dbReference type="Pfam" id="PF00873">
    <property type="entry name" value="ACR_tran"/>
    <property type="match status" value="1"/>
</dbReference>
<dbReference type="PRINTS" id="PR00702">
    <property type="entry name" value="ACRIFLAVINRP"/>
</dbReference>
<dbReference type="SUPFAM" id="SSF82693">
    <property type="entry name" value="Multidrug efflux transporter AcrB pore domain, PN1, PN2, PC1 and PC2 subdomains"/>
    <property type="match status" value="4"/>
</dbReference>
<dbReference type="SUPFAM" id="SSF82714">
    <property type="entry name" value="Multidrug efflux transporter AcrB TolC docking domain, DN and DC subdomains"/>
    <property type="match status" value="2"/>
</dbReference>
<dbReference type="SUPFAM" id="SSF82866">
    <property type="entry name" value="Multidrug efflux transporter AcrB transmembrane domain"/>
    <property type="match status" value="2"/>
</dbReference>
<feature type="chain" id="PRO_1000068509" description="Multidrug resistance protein MdtC">
    <location>
        <begin position="1"/>
        <end position="1026"/>
    </location>
</feature>
<feature type="transmembrane region" description="Helical" evidence="1">
    <location>
        <begin position="12"/>
        <end position="32"/>
    </location>
</feature>
<feature type="transmembrane region" description="Helical" evidence="1">
    <location>
        <begin position="333"/>
        <end position="353"/>
    </location>
</feature>
<feature type="transmembrane region" description="Helical" evidence="1">
    <location>
        <begin position="360"/>
        <end position="380"/>
    </location>
</feature>
<feature type="transmembrane region" description="Helical" evidence="1">
    <location>
        <begin position="387"/>
        <end position="407"/>
    </location>
</feature>
<feature type="transmembrane region" description="Helical" evidence="1">
    <location>
        <begin position="431"/>
        <end position="451"/>
    </location>
</feature>
<feature type="transmembrane region" description="Helical" evidence="1">
    <location>
        <begin position="463"/>
        <end position="483"/>
    </location>
</feature>
<feature type="transmembrane region" description="Helical" evidence="1">
    <location>
        <begin position="528"/>
        <end position="548"/>
    </location>
</feature>
<feature type="transmembrane region" description="Helical" evidence="1">
    <location>
        <begin position="853"/>
        <end position="873"/>
    </location>
</feature>
<feature type="transmembrane region" description="Helical" evidence="1">
    <location>
        <begin position="897"/>
        <end position="917"/>
    </location>
</feature>
<feature type="transmembrane region" description="Helical" evidence="1">
    <location>
        <begin position="953"/>
        <end position="973"/>
    </location>
</feature>
<feature type="transmembrane region" description="Helical" evidence="1">
    <location>
        <begin position="984"/>
        <end position="1004"/>
    </location>
</feature>
<protein>
    <recommendedName>
        <fullName evidence="1">Multidrug resistance protein MdtC</fullName>
    </recommendedName>
    <alternativeName>
        <fullName evidence="1">Multidrug transporter MdtC</fullName>
    </alternativeName>
</protein>
<evidence type="ECO:0000255" key="1">
    <source>
        <dbReference type="HAMAP-Rule" id="MF_01424"/>
    </source>
</evidence>
<proteinExistence type="inferred from homology"/>
<organism>
    <name type="scientific">Serratia proteamaculans (strain 568)</name>
    <dbReference type="NCBI Taxonomy" id="399741"/>
    <lineage>
        <taxon>Bacteria</taxon>
        <taxon>Pseudomonadati</taxon>
        <taxon>Pseudomonadota</taxon>
        <taxon>Gammaproteobacteria</taxon>
        <taxon>Enterobacterales</taxon>
        <taxon>Yersiniaceae</taxon>
        <taxon>Serratia</taxon>
    </lineage>
</organism>
<sequence>MKFFALFIYRPVATTLLTLAIAISGVISFSLLPVSPLPQVDYPVISISASLPGADPETMASSVATPLERALGRIAGVNEMTSMSSLGSTRVILQFDLDRDINGAARDVQAAINAAQSLLPTGMPSRPSYRKVNPSDAPIMILTLTSDTYSQGQLYDFASTQLAQKIAQTEGVGDVSVGGSSLPAVRVELNPSALFNQGISLDAVRQTISNANVRRPQGSVENQQQRWQIQANDELKTAEVYRPLIIHYNNGSAVRLSDVAEVNDSVQDVRNAGMTNAKPAIILTISRAPDANIIETVDRIRAELPTLQNNIPASIQLNIAQDRSPTIRASLAEVEQSLVIAIGLVILVVFIFLRSGRATLIPAVAVPVSLIGSFTAMYLCGFSLNNLSLMALTIATGFVVDDAIVVLENISRHIEAGMKPINAALVGVREVGFTVLSMSVSLVAVFIPLLLMEGLPGRLFREFAVTLSVSIGLSLIISLTLTPMMCAYLLRHQPPRSQRRIRGFGKMLLALQKGYGRSLSWVLGHSRWVLAVFLATIALNVWLYVSIPKTFFPEQDTGRLMGFIQADQSISFQAMRVKLEDFMKIVREDPDVDNVTGFTGGSRTNSGSMFISLKPLSVRSDDAQKVIARLRAKLAKEPGASLFLMAVQDIRVGGRQANASYQYTLMADDLAALREWEPKIRTALAALPELADVNSDQQDKGSEMDLVYDRETMARLGISVSDANNLLNNAFGQRQISTIYQPLNQYKVVMEVAPPYTQDVSSLDKMFVINSDGKAIPLSYFASWRPANAPLSVNHQGLSAASTISFNLPDGGSLSDATAGIERTMTALGVPATVRGAFAGTAQVFQETLKSQLLLIAAAIATVYIVLGILYESYIHPLTILSTLPSAGVGALLALELFGAPFSLIALIGIMLLIGIVKKNAIMMVDFALDAQRNGGISAHDAIFQACLLRFRPIMMTTLAALFGALPLVLTHGDGAELRQPLGITIVGGLIVSQLLTLYTTPVVYLYFDRLQMKFRRGKKLDPLPQ</sequence>
<gene>
    <name evidence="1" type="primary">mdtC</name>
    <name type="ordered locus">Spro_3554</name>
</gene>
<reference key="1">
    <citation type="submission" date="2007-09" db="EMBL/GenBank/DDBJ databases">
        <title>Complete sequence of chromosome of Serratia proteamaculans 568.</title>
        <authorList>
            <consortium name="US DOE Joint Genome Institute"/>
            <person name="Copeland A."/>
            <person name="Lucas S."/>
            <person name="Lapidus A."/>
            <person name="Barry K."/>
            <person name="Glavina del Rio T."/>
            <person name="Dalin E."/>
            <person name="Tice H."/>
            <person name="Pitluck S."/>
            <person name="Chain P."/>
            <person name="Malfatti S."/>
            <person name="Shin M."/>
            <person name="Vergez L."/>
            <person name="Schmutz J."/>
            <person name="Larimer F."/>
            <person name="Land M."/>
            <person name="Hauser L."/>
            <person name="Kyrpides N."/>
            <person name="Kim E."/>
            <person name="Taghavi S."/>
            <person name="Newman L."/>
            <person name="Vangronsveld J."/>
            <person name="van der Lelie D."/>
            <person name="Richardson P."/>
        </authorList>
    </citation>
    <scope>NUCLEOTIDE SEQUENCE [LARGE SCALE GENOMIC DNA]</scope>
    <source>
        <strain>568</strain>
    </source>
</reference>
<name>MDTC_SERP5</name>
<keyword id="KW-0997">Cell inner membrane</keyword>
<keyword id="KW-1003">Cell membrane</keyword>
<keyword id="KW-0472">Membrane</keyword>
<keyword id="KW-0812">Transmembrane</keyword>
<keyword id="KW-1133">Transmembrane helix</keyword>
<keyword id="KW-0813">Transport</keyword>
<accession>A8GHR0</accession>